<comment type="function">
    <text>Serves as a slightly cation selective porin.</text>
</comment>
<comment type="subunit">
    <text>Homotrimer.</text>
</comment>
<comment type="subcellular location">
    <subcellularLocation>
        <location>Cell outer membrane</location>
        <topology>Multi-pass membrane protein</topology>
    </subcellularLocation>
</comment>
<comment type="similarity">
    <text evidence="1">Belongs to the Gram-negative porin family.</text>
</comment>
<reference key="1">
    <citation type="journal article" date="1992" name="FEMS Microbiol. Lett.">
        <title>Sequence analysis and relationships between meningococcal class 3 serotype proteins and other porins from pathogenic and non-pathogenic Neisseria species.</title>
        <authorList>
            <person name="Ward M.J."/>
            <person name="Lambden P.R."/>
            <person name="Heckels J.E."/>
        </authorList>
    </citation>
    <scope>NUCLEOTIDE SEQUENCE [GENOMIC DNA]</scope>
    <source>
        <strain>CCUG 26474 / CIP 5956 / NCTC 4591</strain>
    </source>
</reference>
<protein>
    <recommendedName>
        <fullName>Major outer membrane protein P.IB</fullName>
        <shortName>PIB</shortName>
        <shortName>Protein IB</shortName>
    </recommendedName>
    <alternativeName>
        <fullName>Porin</fullName>
    </alternativeName>
</protein>
<dbReference type="EMBL" id="X65461">
    <property type="protein sequence ID" value="CAA46453.1"/>
    <property type="molecule type" value="Genomic_DNA"/>
</dbReference>
<dbReference type="PIR" id="S20736">
    <property type="entry name" value="S20736"/>
</dbReference>
<dbReference type="SMR" id="P30692"/>
<dbReference type="TCDB" id="1.B.1.5.3">
    <property type="family name" value="the general bacterial porin (gbp) family"/>
</dbReference>
<dbReference type="GO" id="GO:0009279">
    <property type="term" value="C:cell outer membrane"/>
    <property type="evidence" value="ECO:0007669"/>
    <property type="project" value="UniProtKB-SubCell"/>
</dbReference>
<dbReference type="GO" id="GO:0046930">
    <property type="term" value="C:pore complex"/>
    <property type="evidence" value="ECO:0007669"/>
    <property type="project" value="UniProtKB-KW"/>
</dbReference>
<dbReference type="GO" id="GO:0015288">
    <property type="term" value="F:porin activity"/>
    <property type="evidence" value="ECO:0007669"/>
    <property type="project" value="UniProtKB-KW"/>
</dbReference>
<dbReference type="GO" id="GO:0034220">
    <property type="term" value="P:monoatomic ion transmembrane transport"/>
    <property type="evidence" value="ECO:0007669"/>
    <property type="project" value="InterPro"/>
</dbReference>
<dbReference type="CDD" id="cd00342">
    <property type="entry name" value="gram_neg_porins"/>
    <property type="match status" value="1"/>
</dbReference>
<dbReference type="Gene3D" id="2.40.160.10">
    <property type="entry name" value="Porin"/>
    <property type="match status" value="1"/>
</dbReference>
<dbReference type="InterPro" id="IPR050298">
    <property type="entry name" value="Gram-neg_bact_OMP"/>
</dbReference>
<dbReference type="InterPro" id="IPR033900">
    <property type="entry name" value="Gram_neg_porin_domain"/>
</dbReference>
<dbReference type="InterPro" id="IPR023614">
    <property type="entry name" value="Porin_dom_sf"/>
</dbReference>
<dbReference type="InterPro" id="IPR001702">
    <property type="entry name" value="Porin_Gram-ve"/>
</dbReference>
<dbReference type="InterPro" id="IPR013793">
    <property type="entry name" value="Porin_Gram-ve_CS"/>
</dbReference>
<dbReference type="InterPro" id="IPR002299">
    <property type="entry name" value="Porin_Neis"/>
</dbReference>
<dbReference type="NCBIfam" id="NF040479">
    <property type="entry name" value="porin_porB_Neis"/>
    <property type="match status" value="1"/>
</dbReference>
<dbReference type="PANTHER" id="PTHR34501:SF9">
    <property type="entry name" value="MAJOR OUTER MEMBRANE PROTEIN P.IA"/>
    <property type="match status" value="1"/>
</dbReference>
<dbReference type="PANTHER" id="PTHR34501">
    <property type="entry name" value="PROTEIN YDDL-RELATED"/>
    <property type="match status" value="1"/>
</dbReference>
<dbReference type="Pfam" id="PF00267">
    <property type="entry name" value="Porin_1"/>
    <property type="match status" value="1"/>
</dbReference>
<dbReference type="PRINTS" id="PR00182">
    <property type="entry name" value="ECOLNEIPORIN"/>
</dbReference>
<dbReference type="PRINTS" id="PR00184">
    <property type="entry name" value="NEISSPPORIN"/>
</dbReference>
<dbReference type="SUPFAM" id="SSF56935">
    <property type="entry name" value="Porins"/>
    <property type="match status" value="1"/>
</dbReference>
<dbReference type="PROSITE" id="PS00576">
    <property type="entry name" value="GRAM_NEG_PORIN"/>
    <property type="match status" value="1"/>
</dbReference>
<evidence type="ECO:0000305" key="1"/>
<name>OMPB_NEISI</name>
<sequence length="357" mass="38817">MKKSLIALTLAALPVAAMADVTLYGQVKAGVEVSRTKETVNHVSTKNKTATEIADFGSRIGFKGHEHLSNNLNAIWQVEQNTSVAGTDKGWGTRESFIGLEGGFGKVRAGKLNTALKDNSDSVDPWESSDANASVLQFGKLKRVDERKVSVRYDSPVFAGFSASAQYQPRDNANPEDKHVHDVKTRHSFDLGLNYENSGFFGRYAGTFAKRKVLSDDHLELFNSNTTLGSGVYKDYQAHRLVGGYDANNVLVSVAGQYEGFKADVADAKKNERTEVAVTGGYRMGNVMPRLSYAHGFKAKENGVKQGNSQYNQVIVGADYDFSKRTSALVSAGWLKEGKGGDKTQSTAGLVGLRHKF</sequence>
<accession>P30692</accession>
<feature type="signal peptide">
    <location>
        <begin position="1"/>
        <end position="19"/>
    </location>
</feature>
<feature type="chain" id="PRO_0000025279" description="Major outer membrane protein P.IB">
    <location>
        <begin position="20"/>
        <end position="357"/>
    </location>
</feature>
<organism>
    <name type="scientific">Neisseria sicca</name>
    <dbReference type="NCBI Taxonomy" id="490"/>
    <lineage>
        <taxon>Bacteria</taxon>
        <taxon>Pseudomonadati</taxon>
        <taxon>Pseudomonadota</taxon>
        <taxon>Betaproteobacteria</taxon>
        <taxon>Neisseriales</taxon>
        <taxon>Neisseriaceae</taxon>
        <taxon>Neisseria</taxon>
    </lineage>
</organism>
<keyword id="KW-0998">Cell outer membrane</keyword>
<keyword id="KW-0406">Ion transport</keyword>
<keyword id="KW-0472">Membrane</keyword>
<keyword id="KW-0626">Porin</keyword>
<keyword id="KW-0732">Signal</keyword>
<keyword id="KW-0812">Transmembrane</keyword>
<keyword id="KW-1134">Transmembrane beta strand</keyword>
<keyword id="KW-0813">Transport</keyword>
<proteinExistence type="inferred from homology"/>
<gene>
    <name type="primary">por</name>
</gene>